<name>RL7_GLUOX</name>
<evidence type="ECO:0000255" key="1">
    <source>
        <dbReference type="HAMAP-Rule" id="MF_00368"/>
    </source>
</evidence>
<evidence type="ECO:0000305" key="2"/>
<protein>
    <recommendedName>
        <fullName evidence="1">Large ribosomal subunit protein bL12</fullName>
    </recommendedName>
    <alternativeName>
        <fullName evidence="2">50S ribosomal protein L7/L12</fullName>
    </alternativeName>
</protein>
<reference key="1">
    <citation type="journal article" date="2005" name="Nat. Biotechnol.">
        <title>Complete genome sequence of the acetic acid bacterium Gluconobacter oxydans.</title>
        <authorList>
            <person name="Prust C."/>
            <person name="Hoffmeister M."/>
            <person name="Liesegang H."/>
            <person name="Wiezer A."/>
            <person name="Fricke W.F."/>
            <person name="Ehrenreich A."/>
            <person name="Gottschalk G."/>
            <person name="Deppenmeier U."/>
        </authorList>
    </citation>
    <scope>NUCLEOTIDE SEQUENCE [LARGE SCALE GENOMIC DNA]</scope>
    <source>
        <strain>621H</strain>
    </source>
</reference>
<dbReference type="EMBL" id="CP000009">
    <property type="protein sequence ID" value="AAW60170.1"/>
    <property type="molecule type" value="Genomic_DNA"/>
</dbReference>
<dbReference type="RefSeq" id="WP_011251972.1">
    <property type="nucleotide sequence ID" value="NC_006677.1"/>
</dbReference>
<dbReference type="SMR" id="Q5FTX6"/>
<dbReference type="STRING" id="290633.GOX0387"/>
<dbReference type="KEGG" id="gox:GOX0387"/>
<dbReference type="eggNOG" id="COG0222">
    <property type="taxonomic scope" value="Bacteria"/>
</dbReference>
<dbReference type="HOGENOM" id="CLU_086499_3_0_5"/>
<dbReference type="Proteomes" id="UP000006375">
    <property type="component" value="Chromosome"/>
</dbReference>
<dbReference type="GO" id="GO:0022625">
    <property type="term" value="C:cytosolic large ribosomal subunit"/>
    <property type="evidence" value="ECO:0007669"/>
    <property type="project" value="TreeGrafter"/>
</dbReference>
<dbReference type="GO" id="GO:0003729">
    <property type="term" value="F:mRNA binding"/>
    <property type="evidence" value="ECO:0007669"/>
    <property type="project" value="TreeGrafter"/>
</dbReference>
<dbReference type="GO" id="GO:0003735">
    <property type="term" value="F:structural constituent of ribosome"/>
    <property type="evidence" value="ECO:0007669"/>
    <property type="project" value="InterPro"/>
</dbReference>
<dbReference type="GO" id="GO:0006412">
    <property type="term" value="P:translation"/>
    <property type="evidence" value="ECO:0007669"/>
    <property type="project" value="UniProtKB-UniRule"/>
</dbReference>
<dbReference type="CDD" id="cd00387">
    <property type="entry name" value="Ribosomal_L7_L12"/>
    <property type="match status" value="1"/>
</dbReference>
<dbReference type="FunFam" id="1.20.5.710:FF:000007">
    <property type="entry name" value="50S ribosomal protein L7/L12"/>
    <property type="match status" value="1"/>
</dbReference>
<dbReference type="FunFam" id="3.30.1390.10:FF:000001">
    <property type="entry name" value="50S ribosomal protein L7/L12"/>
    <property type="match status" value="1"/>
</dbReference>
<dbReference type="Gene3D" id="3.30.1390.10">
    <property type="match status" value="1"/>
</dbReference>
<dbReference type="Gene3D" id="1.20.5.710">
    <property type="entry name" value="Single helix bin"/>
    <property type="match status" value="1"/>
</dbReference>
<dbReference type="HAMAP" id="MF_00368">
    <property type="entry name" value="Ribosomal_bL12"/>
    <property type="match status" value="1"/>
</dbReference>
<dbReference type="InterPro" id="IPR000206">
    <property type="entry name" value="Ribosomal_bL12"/>
</dbReference>
<dbReference type="InterPro" id="IPR013823">
    <property type="entry name" value="Ribosomal_bL12_C"/>
</dbReference>
<dbReference type="InterPro" id="IPR014719">
    <property type="entry name" value="Ribosomal_bL12_C/ClpS-like"/>
</dbReference>
<dbReference type="InterPro" id="IPR008932">
    <property type="entry name" value="Ribosomal_bL12_oligo"/>
</dbReference>
<dbReference type="InterPro" id="IPR036235">
    <property type="entry name" value="Ribosomal_bL12_oligo_N_sf"/>
</dbReference>
<dbReference type="NCBIfam" id="TIGR00855">
    <property type="entry name" value="L12"/>
    <property type="match status" value="1"/>
</dbReference>
<dbReference type="PANTHER" id="PTHR45987">
    <property type="entry name" value="39S RIBOSOMAL PROTEIN L12"/>
    <property type="match status" value="1"/>
</dbReference>
<dbReference type="PANTHER" id="PTHR45987:SF4">
    <property type="entry name" value="LARGE RIBOSOMAL SUBUNIT PROTEIN BL12M"/>
    <property type="match status" value="1"/>
</dbReference>
<dbReference type="Pfam" id="PF00542">
    <property type="entry name" value="Ribosomal_L12"/>
    <property type="match status" value="1"/>
</dbReference>
<dbReference type="Pfam" id="PF16320">
    <property type="entry name" value="Ribosomal_L12_N"/>
    <property type="match status" value="1"/>
</dbReference>
<dbReference type="SUPFAM" id="SSF54736">
    <property type="entry name" value="ClpS-like"/>
    <property type="match status" value="1"/>
</dbReference>
<dbReference type="SUPFAM" id="SSF48300">
    <property type="entry name" value="Ribosomal protein L7/12, oligomerisation (N-terminal) domain"/>
    <property type="match status" value="1"/>
</dbReference>
<sequence>MADLAKIVEELSALTVLEAAELSKMLEEKWGVSAAAPVAVAAAAAGGAAAAPAEEQTEFTVVLADAGDKKINVIKEVRGITGLGLKEAKDLVEGAPKTVKEGASKDEAAKIKKALEDAGAKVEVK</sequence>
<comment type="function">
    <text evidence="1">Forms part of the ribosomal stalk which helps the ribosome interact with GTP-bound translation factors. Is thus essential for accurate translation.</text>
</comment>
<comment type="subunit">
    <text evidence="1">Homodimer. Part of the ribosomal stalk of the 50S ribosomal subunit. Forms a multimeric L10(L12)X complex, where L10 forms an elongated spine to which 2 to 4 L12 dimers bind in a sequential fashion. Binds GTP-bound translation factors.</text>
</comment>
<comment type="similarity">
    <text evidence="1">Belongs to the bacterial ribosomal protein bL12 family.</text>
</comment>
<accession>Q5FTX6</accession>
<keyword id="KW-1185">Reference proteome</keyword>
<keyword id="KW-0687">Ribonucleoprotein</keyword>
<keyword id="KW-0689">Ribosomal protein</keyword>
<feature type="chain" id="PRO_0000243430" description="Large ribosomal subunit protein bL12">
    <location>
        <begin position="1"/>
        <end position="125"/>
    </location>
</feature>
<gene>
    <name evidence="1" type="primary">rplL</name>
    <name type="ordered locus">GOX0387</name>
</gene>
<organism>
    <name type="scientific">Gluconobacter oxydans (strain 621H)</name>
    <name type="common">Gluconobacter suboxydans</name>
    <dbReference type="NCBI Taxonomy" id="290633"/>
    <lineage>
        <taxon>Bacteria</taxon>
        <taxon>Pseudomonadati</taxon>
        <taxon>Pseudomonadota</taxon>
        <taxon>Alphaproteobacteria</taxon>
        <taxon>Acetobacterales</taxon>
        <taxon>Acetobacteraceae</taxon>
        <taxon>Gluconobacter</taxon>
    </lineage>
</organism>
<proteinExistence type="inferred from homology"/>